<proteinExistence type="inferred from homology"/>
<organism>
    <name type="scientific">Marinomonas sp. (strain MWYL1)</name>
    <dbReference type="NCBI Taxonomy" id="400668"/>
    <lineage>
        <taxon>Bacteria</taxon>
        <taxon>Pseudomonadati</taxon>
        <taxon>Pseudomonadota</taxon>
        <taxon>Gammaproteobacteria</taxon>
        <taxon>Oceanospirillales</taxon>
        <taxon>Oceanospirillaceae</taxon>
        <taxon>Marinomonas</taxon>
    </lineage>
</organism>
<feature type="chain" id="PRO_1000088454" description="Enoyl-[acyl-carrier-protein] reductase [NADH]">
    <location>
        <begin position="1"/>
        <end position="400"/>
    </location>
</feature>
<feature type="active site" description="Proton donor" evidence="1">
    <location>
        <position position="235"/>
    </location>
</feature>
<feature type="binding site" evidence="1">
    <location>
        <begin position="48"/>
        <end position="53"/>
    </location>
    <ligand>
        <name>NAD(+)</name>
        <dbReference type="ChEBI" id="CHEBI:57540"/>
    </ligand>
</feature>
<feature type="binding site" evidence="1">
    <location>
        <begin position="74"/>
        <end position="75"/>
    </location>
    <ligand>
        <name>NAD(+)</name>
        <dbReference type="ChEBI" id="CHEBI:57540"/>
    </ligand>
</feature>
<feature type="binding site" evidence="1">
    <location>
        <begin position="111"/>
        <end position="112"/>
    </location>
    <ligand>
        <name>NAD(+)</name>
        <dbReference type="ChEBI" id="CHEBI:57540"/>
    </ligand>
</feature>
<feature type="binding site" evidence="1">
    <location>
        <begin position="139"/>
        <end position="140"/>
    </location>
    <ligand>
        <name>NAD(+)</name>
        <dbReference type="ChEBI" id="CHEBI:57540"/>
    </ligand>
</feature>
<feature type="binding site" evidence="1">
    <location>
        <position position="225"/>
    </location>
    <ligand>
        <name>substrate</name>
    </ligand>
</feature>
<feature type="binding site" evidence="1">
    <location>
        <position position="244"/>
    </location>
    <ligand>
        <name>NAD(+)</name>
        <dbReference type="ChEBI" id="CHEBI:57540"/>
    </ligand>
</feature>
<feature type="binding site" evidence="1">
    <location>
        <begin position="273"/>
        <end position="275"/>
    </location>
    <ligand>
        <name>NAD(+)</name>
        <dbReference type="ChEBI" id="CHEBI:57540"/>
    </ligand>
</feature>
<feature type="site" description="Plays an important role in discriminating NADH against NADPH" evidence="1">
    <location>
        <position position="75"/>
    </location>
</feature>
<dbReference type="EC" id="1.3.1.9" evidence="1"/>
<dbReference type="EMBL" id="CP000749">
    <property type="protein sequence ID" value="ABR71777.1"/>
    <property type="molecule type" value="Genomic_DNA"/>
</dbReference>
<dbReference type="SMR" id="A6VZ98"/>
<dbReference type="STRING" id="400668.Mmwyl1_2865"/>
<dbReference type="KEGG" id="mmw:Mmwyl1_2865"/>
<dbReference type="eggNOG" id="COG3007">
    <property type="taxonomic scope" value="Bacteria"/>
</dbReference>
<dbReference type="HOGENOM" id="CLU_057698_1_0_6"/>
<dbReference type="OrthoDB" id="9802260at2"/>
<dbReference type="UniPathway" id="UPA00094"/>
<dbReference type="GO" id="GO:0004318">
    <property type="term" value="F:enoyl-[acyl-carrier-protein] reductase (NADH) activity"/>
    <property type="evidence" value="ECO:0007669"/>
    <property type="project" value="UniProtKB-UniRule"/>
</dbReference>
<dbReference type="GO" id="GO:0051287">
    <property type="term" value="F:NAD binding"/>
    <property type="evidence" value="ECO:0007669"/>
    <property type="project" value="UniProtKB-UniRule"/>
</dbReference>
<dbReference type="GO" id="GO:0050343">
    <property type="term" value="F:trans-2-enoyl-CoA reductase (NADH) activity"/>
    <property type="evidence" value="ECO:0007669"/>
    <property type="project" value="TreeGrafter"/>
</dbReference>
<dbReference type="GO" id="GO:0006633">
    <property type="term" value="P:fatty acid biosynthetic process"/>
    <property type="evidence" value="ECO:0007669"/>
    <property type="project" value="UniProtKB-UniRule"/>
</dbReference>
<dbReference type="FunFam" id="3.40.50.720:FF:000221">
    <property type="entry name" value="Enoyl-[acyl-carrier-protein] reductase [NADH]"/>
    <property type="match status" value="1"/>
</dbReference>
<dbReference type="Gene3D" id="3.40.50.720">
    <property type="entry name" value="NAD(P)-binding Rossmann-like Domain"/>
    <property type="match status" value="1"/>
</dbReference>
<dbReference type="HAMAP" id="MF_01838">
    <property type="entry name" value="FabV_reductase"/>
    <property type="match status" value="1"/>
</dbReference>
<dbReference type="InterPro" id="IPR024906">
    <property type="entry name" value="Eno_Rdtase_FAD-bd_dom"/>
</dbReference>
<dbReference type="InterPro" id="IPR024910">
    <property type="entry name" value="Enoyl-CoA_Rdtase_cat_dom"/>
</dbReference>
<dbReference type="InterPro" id="IPR050048">
    <property type="entry name" value="FabV-like_NADH_b"/>
</dbReference>
<dbReference type="InterPro" id="IPR010758">
    <property type="entry name" value="Trans-2-enoyl-CoA_reductase"/>
</dbReference>
<dbReference type="NCBIfam" id="NF043048">
    <property type="entry name" value="EnoyACPredFabV"/>
    <property type="match status" value="1"/>
</dbReference>
<dbReference type="NCBIfam" id="NF010177">
    <property type="entry name" value="PRK13656.1"/>
    <property type="match status" value="1"/>
</dbReference>
<dbReference type="PANTHER" id="PTHR37480">
    <property type="entry name" value="ENOYL-[ACYL-CARRIER-PROTEIN] REDUCTASE [NADH]"/>
    <property type="match status" value="1"/>
</dbReference>
<dbReference type="PANTHER" id="PTHR37480:SF1">
    <property type="entry name" value="ENOYL-[ACYL-CARRIER-PROTEIN] REDUCTASE [NADH]"/>
    <property type="match status" value="1"/>
</dbReference>
<dbReference type="Pfam" id="PF07055">
    <property type="entry name" value="Eno-Rase_FAD_bd"/>
    <property type="match status" value="1"/>
</dbReference>
<dbReference type="Pfam" id="PF12242">
    <property type="entry name" value="Eno-Rase_NADH_b"/>
    <property type="match status" value="1"/>
</dbReference>
<dbReference type="Pfam" id="PF12241">
    <property type="entry name" value="Enoyl_reductase"/>
    <property type="match status" value="1"/>
</dbReference>
<evidence type="ECO:0000255" key="1">
    <source>
        <dbReference type="HAMAP-Rule" id="MF_01838"/>
    </source>
</evidence>
<comment type="function">
    <text evidence="1">Involved in the final reduction of the elongation cycle of fatty acid synthesis (FAS II). Catalyzes the reduction of a carbon-carbon double bond in an enoyl moiety that is covalently linked to an acyl carrier protein (ACP).</text>
</comment>
<comment type="catalytic activity">
    <reaction evidence="1">
        <text>a 2,3-saturated acyl-[ACP] + NAD(+) = a (2E)-enoyl-[ACP] + NADH + H(+)</text>
        <dbReference type="Rhea" id="RHEA:10240"/>
        <dbReference type="Rhea" id="RHEA-COMP:9925"/>
        <dbReference type="Rhea" id="RHEA-COMP:9926"/>
        <dbReference type="ChEBI" id="CHEBI:15378"/>
        <dbReference type="ChEBI" id="CHEBI:57540"/>
        <dbReference type="ChEBI" id="CHEBI:57945"/>
        <dbReference type="ChEBI" id="CHEBI:78784"/>
        <dbReference type="ChEBI" id="CHEBI:78785"/>
        <dbReference type="EC" id="1.3.1.9"/>
    </reaction>
</comment>
<comment type="pathway">
    <text evidence="1">Lipid metabolism; fatty acid biosynthesis.</text>
</comment>
<comment type="subunit">
    <text evidence="1">Monomer.</text>
</comment>
<comment type="similarity">
    <text evidence="1">Belongs to the TER reductase family.</text>
</comment>
<gene>
    <name evidence="1" type="primary">fabV</name>
    <name type="ordered locus">Mmwyl1_2865</name>
</gene>
<keyword id="KW-0275">Fatty acid biosynthesis</keyword>
<keyword id="KW-0276">Fatty acid metabolism</keyword>
<keyword id="KW-0444">Lipid biosynthesis</keyword>
<keyword id="KW-0443">Lipid metabolism</keyword>
<keyword id="KW-0520">NAD</keyword>
<keyword id="KW-0560">Oxidoreductase</keyword>
<name>FABV_MARMS</name>
<sequence>MIIKPKIRGFICTTTHPVGCEQNVREQIAFTKSKGAIENGPKKVLVIGASSGYGLSSRIAAAFGSGAATIGVFFEKPGTDKKTGTAGWYNSAAFDKVAKEEGLYAKSINGDAFSNEARATVIDLIKQDLGQIDMVVYSLASPVRKMPETGEVVRSVLKPIGQPYRSTAIDTNKDVIIEAEIEPATEEEVAATTTVMGGQDWELWMSALQEAGVLAEGTRTVAYSYIGSDITWPIYWHGALGKAKEDLDRASAAIDSQLAKIGGGANVAVLKSVVTQASSAIPVMPLYLAMVFKVMREKGIHEGCMDQIYRMFAERLYNNHNPAELTDDKNRLRLDDWELREDVQQACRELWPKVNDANLFAETDYQLYKDEFLKLFGFGVDGVDYDAEANPEADFEVITL</sequence>
<reference key="1">
    <citation type="submission" date="2007-06" db="EMBL/GenBank/DDBJ databases">
        <title>Complete sequence of Marinomonas sp. MWYL1.</title>
        <authorList>
            <consortium name="US DOE Joint Genome Institute"/>
            <person name="Copeland A."/>
            <person name="Lucas S."/>
            <person name="Lapidus A."/>
            <person name="Barry K."/>
            <person name="Glavina del Rio T."/>
            <person name="Dalin E."/>
            <person name="Tice H."/>
            <person name="Pitluck S."/>
            <person name="Kiss H."/>
            <person name="Brettin T."/>
            <person name="Bruce D."/>
            <person name="Detter J.C."/>
            <person name="Han C."/>
            <person name="Schmutz J."/>
            <person name="Larimer F."/>
            <person name="Land M."/>
            <person name="Hauser L."/>
            <person name="Kyrpides N."/>
            <person name="Kim E."/>
            <person name="Johnston A.W.B."/>
            <person name="Todd J.D."/>
            <person name="Rogers R."/>
            <person name="Wexler M."/>
            <person name="Bond P.L."/>
            <person name="Li Y."/>
            <person name="Richardson P."/>
        </authorList>
    </citation>
    <scope>NUCLEOTIDE SEQUENCE [LARGE SCALE GENOMIC DNA]</scope>
    <source>
        <strain>MWYL1</strain>
    </source>
</reference>
<protein>
    <recommendedName>
        <fullName evidence="1">Enoyl-[acyl-carrier-protein] reductase [NADH]</fullName>
        <shortName evidence="1">ENR</shortName>
        <ecNumber evidence="1">1.3.1.9</ecNumber>
    </recommendedName>
</protein>
<accession>A6VZ98</accession>